<organism>
    <name type="scientific">Cronobacter sakazakii (strain ATCC BAA-894)</name>
    <name type="common">Enterobacter sakazakii</name>
    <dbReference type="NCBI Taxonomy" id="290339"/>
    <lineage>
        <taxon>Bacteria</taxon>
        <taxon>Pseudomonadati</taxon>
        <taxon>Pseudomonadota</taxon>
        <taxon>Gammaproteobacteria</taxon>
        <taxon>Enterobacterales</taxon>
        <taxon>Enterobacteriaceae</taxon>
        <taxon>Cronobacter</taxon>
    </lineage>
</organism>
<evidence type="ECO:0000255" key="1">
    <source>
        <dbReference type="HAMAP-Rule" id="MF_01844"/>
    </source>
</evidence>
<sequence>MMIKKVERFFKSDAAGGIVLIAAAALAMLLANLNATQELYTGFLSTPVELKFGALEIKKNMLLWVNDALMAVFFLLVGLEVKRELVQGSLASRRQASLPVIAALGGMVLPAALYLAFNFQDPITRAGWAIPAATDIAFALGILALLGSRVPPALKVFLMALAIIDDLGAIVIIALFYTSSLSMVSLMVAAGAIAVLAVLNLCNVRRVGVYILVGVVLWTAVLKSGVHATLAGVIIGFFVPLKAQKGHSPAGTLEHALHPWVGFLILPLFAFANAGVSLDGVTLAGLASLLPLGIIAGLFIGKPLGISLFCALAVKLKWATLPPGVSQKTILAVGVLCGIGFTMSIFIASLAFGDVDAALVTWAKLGILVGSLLAAVIGYALLRSHLSRAP</sequence>
<dbReference type="EMBL" id="CP000783">
    <property type="protein sequence ID" value="ABU78537.1"/>
    <property type="molecule type" value="Genomic_DNA"/>
</dbReference>
<dbReference type="RefSeq" id="WP_012125803.1">
    <property type="nucleotide sequence ID" value="NC_009778.1"/>
</dbReference>
<dbReference type="SMR" id="A7MIL1"/>
<dbReference type="KEGG" id="esa:ESA_03316"/>
<dbReference type="PATRIC" id="fig|290339.8.peg.2944"/>
<dbReference type="HOGENOM" id="CLU_015803_1_0_6"/>
<dbReference type="Proteomes" id="UP000000260">
    <property type="component" value="Chromosome"/>
</dbReference>
<dbReference type="GO" id="GO:0005886">
    <property type="term" value="C:plasma membrane"/>
    <property type="evidence" value="ECO:0007669"/>
    <property type="project" value="UniProtKB-SubCell"/>
</dbReference>
<dbReference type="GO" id="GO:0015385">
    <property type="term" value="F:sodium:proton antiporter activity"/>
    <property type="evidence" value="ECO:0007669"/>
    <property type="project" value="TreeGrafter"/>
</dbReference>
<dbReference type="GO" id="GO:0006885">
    <property type="term" value="P:regulation of pH"/>
    <property type="evidence" value="ECO:0007669"/>
    <property type="project" value="InterPro"/>
</dbReference>
<dbReference type="FunFam" id="1.20.1530.10:FF:000001">
    <property type="entry name" value="Na(+)/H(+) antiporter NhaA"/>
    <property type="match status" value="1"/>
</dbReference>
<dbReference type="Gene3D" id="1.20.1530.10">
    <property type="entry name" value="Na+/H+ antiporter like domain"/>
    <property type="match status" value="1"/>
</dbReference>
<dbReference type="HAMAP" id="MF_01844">
    <property type="entry name" value="NhaA"/>
    <property type="match status" value="1"/>
</dbReference>
<dbReference type="InterPro" id="IPR023171">
    <property type="entry name" value="Na/H_antiporter_dom_sf"/>
</dbReference>
<dbReference type="InterPro" id="IPR004670">
    <property type="entry name" value="NhaA"/>
</dbReference>
<dbReference type="NCBIfam" id="TIGR00773">
    <property type="entry name" value="NhaA"/>
    <property type="match status" value="1"/>
</dbReference>
<dbReference type="NCBIfam" id="NF007111">
    <property type="entry name" value="PRK09560.1"/>
    <property type="match status" value="1"/>
</dbReference>
<dbReference type="NCBIfam" id="NF007112">
    <property type="entry name" value="PRK09561.1"/>
    <property type="match status" value="1"/>
</dbReference>
<dbReference type="PANTHER" id="PTHR30341:SF0">
    <property type="entry name" value="NA(+)_H(+) ANTIPORTER NHAA"/>
    <property type="match status" value="1"/>
</dbReference>
<dbReference type="PANTHER" id="PTHR30341">
    <property type="entry name" value="SODIUM ION/PROTON ANTIPORTER NHAA-RELATED"/>
    <property type="match status" value="1"/>
</dbReference>
<dbReference type="Pfam" id="PF06965">
    <property type="entry name" value="Na_H_antiport_1"/>
    <property type="match status" value="1"/>
</dbReference>
<reference key="1">
    <citation type="journal article" date="2010" name="PLoS ONE">
        <title>Genome sequence of Cronobacter sakazakii BAA-894 and comparative genomic hybridization analysis with other Cronobacter species.</title>
        <authorList>
            <person name="Kucerova E."/>
            <person name="Clifton S.W."/>
            <person name="Xia X.Q."/>
            <person name="Long F."/>
            <person name="Porwollik S."/>
            <person name="Fulton L."/>
            <person name="Fronick C."/>
            <person name="Minx P."/>
            <person name="Kyung K."/>
            <person name="Warren W."/>
            <person name="Fulton R."/>
            <person name="Feng D."/>
            <person name="Wollam A."/>
            <person name="Shah N."/>
            <person name="Bhonagiri V."/>
            <person name="Nash W.E."/>
            <person name="Hallsworth-Pepin K."/>
            <person name="Wilson R.K."/>
            <person name="McClelland M."/>
            <person name="Forsythe S.J."/>
        </authorList>
    </citation>
    <scope>NUCLEOTIDE SEQUENCE [LARGE SCALE GENOMIC DNA]</scope>
    <source>
        <strain>ATCC BAA-894</strain>
    </source>
</reference>
<protein>
    <recommendedName>
        <fullName evidence="1">Na(+)/H(+) antiporter NhaA</fullName>
    </recommendedName>
    <alternativeName>
        <fullName evidence="1">Sodium/proton antiporter NhaA</fullName>
    </alternativeName>
</protein>
<gene>
    <name evidence="1" type="primary">nhaA</name>
    <name type="ordered locus">ESA_03316</name>
</gene>
<accession>A7MIL1</accession>
<name>NHAA_CROS8</name>
<proteinExistence type="inferred from homology"/>
<comment type="function">
    <text evidence="1">Na(+)/H(+) antiporter that extrudes sodium in exchange for external protons.</text>
</comment>
<comment type="catalytic activity">
    <reaction evidence="1">
        <text>Na(+)(in) + 2 H(+)(out) = Na(+)(out) + 2 H(+)(in)</text>
        <dbReference type="Rhea" id="RHEA:29251"/>
        <dbReference type="ChEBI" id="CHEBI:15378"/>
        <dbReference type="ChEBI" id="CHEBI:29101"/>
    </reaction>
    <physiologicalReaction direction="left-to-right" evidence="1">
        <dbReference type="Rhea" id="RHEA:29252"/>
    </physiologicalReaction>
</comment>
<comment type="subcellular location">
    <subcellularLocation>
        <location evidence="1">Cell inner membrane</location>
        <topology evidence="1">Multi-pass membrane protein</topology>
    </subcellularLocation>
</comment>
<comment type="similarity">
    <text evidence="1">Belongs to the NhaA Na(+)/H(+) (TC 2.A.33) antiporter family.</text>
</comment>
<keyword id="KW-0050">Antiport</keyword>
<keyword id="KW-0997">Cell inner membrane</keyword>
<keyword id="KW-1003">Cell membrane</keyword>
<keyword id="KW-0406">Ion transport</keyword>
<keyword id="KW-0472">Membrane</keyword>
<keyword id="KW-1185">Reference proteome</keyword>
<keyword id="KW-0915">Sodium</keyword>
<keyword id="KW-0739">Sodium transport</keyword>
<keyword id="KW-0812">Transmembrane</keyword>
<keyword id="KW-1133">Transmembrane helix</keyword>
<keyword id="KW-0813">Transport</keyword>
<feature type="chain" id="PRO_0000334279" description="Na(+)/H(+) antiporter NhaA">
    <location>
        <begin position="1"/>
        <end position="390"/>
    </location>
</feature>
<feature type="transmembrane region" description="Helical" evidence="1">
    <location>
        <begin position="14"/>
        <end position="34"/>
    </location>
</feature>
<feature type="transmembrane region" description="Helical" evidence="1">
    <location>
        <begin position="61"/>
        <end position="81"/>
    </location>
</feature>
<feature type="transmembrane region" description="Helical" evidence="1">
    <location>
        <begin position="97"/>
        <end position="117"/>
    </location>
</feature>
<feature type="transmembrane region" description="Helical" evidence="1">
    <location>
        <begin position="126"/>
        <end position="146"/>
    </location>
</feature>
<feature type="transmembrane region" description="Helical" evidence="1">
    <location>
        <begin position="156"/>
        <end position="176"/>
    </location>
</feature>
<feature type="transmembrane region" description="Helical" evidence="1">
    <location>
        <begin position="181"/>
        <end position="201"/>
    </location>
</feature>
<feature type="transmembrane region" description="Helical" evidence="1">
    <location>
        <begin position="221"/>
        <end position="241"/>
    </location>
</feature>
<feature type="transmembrane region" description="Helical" evidence="1">
    <location>
        <begin position="256"/>
        <end position="276"/>
    </location>
</feature>
<feature type="transmembrane region" description="Helical" evidence="1">
    <location>
        <begin position="280"/>
        <end position="300"/>
    </location>
</feature>
<feature type="transmembrane region" description="Helical" evidence="1">
    <location>
        <begin position="305"/>
        <end position="325"/>
    </location>
</feature>
<feature type="transmembrane region" description="Helical" evidence="1">
    <location>
        <begin position="330"/>
        <end position="350"/>
    </location>
</feature>
<feature type="transmembrane region" description="Helical" evidence="1">
    <location>
        <begin position="362"/>
        <end position="382"/>
    </location>
</feature>